<comment type="function">
    <text evidence="1">Assembles around the rod to form the L-ring and probably protects the motor/basal body from shearing forces during rotation.</text>
</comment>
<comment type="subunit">
    <text evidence="1">The basal body constitutes a major portion of the flagellar organelle and consists of four rings (L,P,S, and M) mounted on a central rod.</text>
</comment>
<comment type="subcellular location">
    <subcellularLocation>
        <location evidence="1">Periplasm</location>
    </subcellularLocation>
    <subcellularLocation>
        <location evidence="1">Bacterial flagellum basal body</location>
    </subcellularLocation>
</comment>
<comment type="similarity">
    <text evidence="1">Belongs to the FlgI family.</text>
</comment>
<sequence length="368" mass="38779">MNSIFRKIVFAAFLLLALPQFALAVRIKDIAAFDGVRENQLIGYGLVVGLNGTGDSDQTKFPVQSLVNTLERMGITINRADITVKNVAAVMVTAALPPFAKQGNSLDVLVSSVGDSKSLAGGTLLMTPLKGADSQIYAVAQGGVLTNSFSYGGQAASVQKNHPTAGRVPGGALVERELPNVLAGRSQLRLNLHQPDFTTASRVAAVINNKFKMTVASLTDPGSVQLAIPDDYQGKTVEFVAALERLEVTPDVMARVVLNERTGTIVIGENVRISTVAVSHGNLTLYVKETPRVSQPAPFSSTGETKVVPRTSIKVTEDRGSLAILQQGANIGDVVRALNALGVTPRDLIGIMQAIKAAGALNAELMVI</sequence>
<organism>
    <name type="scientific">Geotalea uraniireducens (strain Rf4)</name>
    <name type="common">Geobacter uraniireducens</name>
    <dbReference type="NCBI Taxonomy" id="351605"/>
    <lineage>
        <taxon>Bacteria</taxon>
        <taxon>Pseudomonadati</taxon>
        <taxon>Thermodesulfobacteriota</taxon>
        <taxon>Desulfuromonadia</taxon>
        <taxon>Geobacterales</taxon>
        <taxon>Geobacteraceae</taxon>
        <taxon>Geotalea</taxon>
    </lineage>
</organism>
<proteinExistence type="inferred from homology"/>
<evidence type="ECO:0000255" key="1">
    <source>
        <dbReference type="HAMAP-Rule" id="MF_00416"/>
    </source>
</evidence>
<protein>
    <recommendedName>
        <fullName evidence="1">Flagellar P-ring protein</fullName>
    </recommendedName>
    <alternativeName>
        <fullName evidence="1">Basal body P-ring protein</fullName>
    </alternativeName>
</protein>
<feature type="signal peptide" evidence="1">
    <location>
        <begin position="1"/>
        <end position="24"/>
    </location>
</feature>
<feature type="chain" id="PRO_5000245471" description="Flagellar P-ring protein">
    <location>
        <begin position="25"/>
        <end position="368"/>
    </location>
</feature>
<reference key="1">
    <citation type="submission" date="2007-05" db="EMBL/GenBank/DDBJ databases">
        <title>Complete sequence of Geobacter uraniireducens Rf4.</title>
        <authorList>
            <consortium name="US DOE Joint Genome Institute"/>
            <person name="Copeland A."/>
            <person name="Lucas S."/>
            <person name="Lapidus A."/>
            <person name="Barry K."/>
            <person name="Detter J.C."/>
            <person name="Glavina del Rio T."/>
            <person name="Hammon N."/>
            <person name="Israni S."/>
            <person name="Dalin E."/>
            <person name="Tice H."/>
            <person name="Pitluck S."/>
            <person name="Chertkov O."/>
            <person name="Brettin T."/>
            <person name="Bruce D."/>
            <person name="Han C."/>
            <person name="Schmutz J."/>
            <person name="Larimer F."/>
            <person name="Land M."/>
            <person name="Hauser L."/>
            <person name="Kyrpides N."/>
            <person name="Mikhailova N."/>
            <person name="Shelobolina E."/>
            <person name="Aklujkar M."/>
            <person name="Lovley D."/>
            <person name="Richardson P."/>
        </authorList>
    </citation>
    <scope>NUCLEOTIDE SEQUENCE [LARGE SCALE GENOMIC DNA]</scope>
    <source>
        <strain>ATCC BAA-1134 / JCM 13001 / Rf4</strain>
    </source>
</reference>
<accession>A5G8X8</accession>
<keyword id="KW-0975">Bacterial flagellum</keyword>
<keyword id="KW-0574">Periplasm</keyword>
<keyword id="KW-1185">Reference proteome</keyword>
<keyword id="KW-0732">Signal</keyword>
<gene>
    <name evidence="1" type="primary">flgI</name>
    <name type="ordered locus">Gura_4103</name>
</gene>
<name>FLGI_GEOUR</name>
<dbReference type="EMBL" id="CP000698">
    <property type="protein sequence ID" value="ABQ28246.1"/>
    <property type="molecule type" value="Genomic_DNA"/>
</dbReference>
<dbReference type="RefSeq" id="WP_011940882.1">
    <property type="nucleotide sequence ID" value="NC_009483.1"/>
</dbReference>
<dbReference type="SMR" id="A5G8X8"/>
<dbReference type="STRING" id="351605.Gura_4103"/>
<dbReference type="KEGG" id="gur:Gura_4103"/>
<dbReference type="HOGENOM" id="CLU_045235_1_0_7"/>
<dbReference type="OrthoDB" id="9786431at2"/>
<dbReference type="Proteomes" id="UP000006695">
    <property type="component" value="Chromosome"/>
</dbReference>
<dbReference type="GO" id="GO:0009428">
    <property type="term" value="C:bacterial-type flagellum basal body, distal rod, P ring"/>
    <property type="evidence" value="ECO:0007669"/>
    <property type="project" value="InterPro"/>
</dbReference>
<dbReference type="GO" id="GO:0030288">
    <property type="term" value="C:outer membrane-bounded periplasmic space"/>
    <property type="evidence" value="ECO:0007669"/>
    <property type="project" value="InterPro"/>
</dbReference>
<dbReference type="GO" id="GO:0005198">
    <property type="term" value="F:structural molecule activity"/>
    <property type="evidence" value="ECO:0007669"/>
    <property type="project" value="InterPro"/>
</dbReference>
<dbReference type="GO" id="GO:0071973">
    <property type="term" value="P:bacterial-type flagellum-dependent cell motility"/>
    <property type="evidence" value="ECO:0007669"/>
    <property type="project" value="InterPro"/>
</dbReference>
<dbReference type="HAMAP" id="MF_00416">
    <property type="entry name" value="FlgI"/>
    <property type="match status" value="1"/>
</dbReference>
<dbReference type="InterPro" id="IPR001782">
    <property type="entry name" value="Flag_FlgI"/>
</dbReference>
<dbReference type="NCBIfam" id="NF003676">
    <property type="entry name" value="PRK05303.1"/>
    <property type="match status" value="1"/>
</dbReference>
<dbReference type="PANTHER" id="PTHR30381">
    <property type="entry name" value="FLAGELLAR P-RING PERIPLASMIC PROTEIN FLGI"/>
    <property type="match status" value="1"/>
</dbReference>
<dbReference type="PANTHER" id="PTHR30381:SF0">
    <property type="entry name" value="FLAGELLAR P-RING PROTEIN"/>
    <property type="match status" value="1"/>
</dbReference>
<dbReference type="Pfam" id="PF02119">
    <property type="entry name" value="FlgI"/>
    <property type="match status" value="1"/>
</dbReference>
<dbReference type="PRINTS" id="PR01010">
    <property type="entry name" value="FLGPRINGFLGI"/>
</dbReference>